<comment type="function">
    <text evidence="1">Catalyzes the attachment of alanine to tRNA(Ala) in a two-step reaction: alanine is first activated by ATP to form Ala-AMP and then transferred to the acceptor end of tRNA(Ala). Also edits incorrectly charged tRNA(Ala) via its editing domain.</text>
</comment>
<comment type="catalytic activity">
    <reaction evidence="1">
        <text>tRNA(Ala) + L-alanine + ATP = L-alanyl-tRNA(Ala) + AMP + diphosphate</text>
        <dbReference type="Rhea" id="RHEA:12540"/>
        <dbReference type="Rhea" id="RHEA-COMP:9657"/>
        <dbReference type="Rhea" id="RHEA-COMP:9923"/>
        <dbReference type="ChEBI" id="CHEBI:30616"/>
        <dbReference type="ChEBI" id="CHEBI:33019"/>
        <dbReference type="ChEBI" id="CHEBI:57972"/>
        <dbReference type="ChEBI" id="CHEBI:78442"/>
        <dbReference type="ChEBI" id="CHEBI:78497"/>
        <dbReference type="ChEBI" id="CHEBI:456215"/>
        <dbReference type="EC" id="6.1.1.7"/>
    </reaction>
</comment>
<comment type="cofactor">
    <cofactor evidence="1">
        <name>Zn(2+)</name>
        <dbReference type="ChEBI" id="CHEBI:29105"/>
    </cofactor>
    <text evidence="1">Binds 1 zinc ion per subunit.</text>
</comment>
<comment type="subunit">
    <text evidence="1">Monomer.</text>
</comment>
<comment type="subcellular location">
    <subcellularLocation>
        <location evidence="2">Plastid</location>
        <location evidence="2">Chloroplast</location>
    </subcellularLocation>
    <subcellularLocation>
        <location evidence="1">Mitochondrion</location>
    </subcellularLocation>
</comment>
<comment type="domain">
    <text evidence="1">Consists of three domains; the N-terminal catalytic domain, the editing domain and the C-terminal C-Ala domain. The editing domain removes incorrectly charged amino acids, while the C-Ala domain, along with tRNA(Ala), serves as a bridge to cooperatively bring together the editing and aminoacylation centers thus stimulating deacylation of misacylated tRNAs.</text>
</comment>
<comment type="disruption phenotype">
    <text evidence="4">Embryo defective. Developmental arrest of the embryo at early cotyledon stage.</text>
</comment>
<comment type="similarity">
    <text evidence="1">Belongs to the class-II aminoacyl-tRNA synthetase family.</text>
</comment>
<comment type="sequence caution" evidence="3">
    <conflict type="erroneous gene model prediction">
        <sequence resource="EMBL-CDS" id="BAB10601"/>
    </conflict>
</comment>
<accession>Q9FFC7</accession>
<protein>
    <recommendedName>
        <fullName evidence="1">Alanine--tRNA ligase, chloroplastic/mitochondrial</fullName>
        <ecNumber evidence="1">6.1.1.7</ecNumber>
    </recommendedName>
    <alternativeName>
        <fullName evidence="1">Alanyl-tRNA synthetase</fullName>
        <shortName evidence="1">AlaRS</shortName>
    </alternativeName>
    <alternativeName>
        <fullName evidence="4">Protein EMBRYO DEFECTIVE 1030</fullName>
    </alternativeName>
    <alternativeName>
        <fullName>Protein EMBRYO DEFECTIVE 263</fullName>
    </alternativeName>
    <alternativeName>
        <fullName>Protein EMBRYO DEFECTIVE 86</fullName>
    </alternativeName>
</protein>
<name>SYAP_ARATH</name>
<keyword id="KW-0030">Aminoacyl-tRNA synthetase</keyword>
<keyword id="KW-0067">ATP-binding</keyword>
<keyword id="KW-0150">Chloroplast</keyword>
<keyword id="KW-1017">Isopeptide bond</keyword>
<keyword id="KW-0436">Ligase</keyword>
<keyword id="KW-0479">Metal-binding</keyword>
<keyword id="KW-0496">Mitochondrion</keyword>
<keyword id="KW-0547">Nucleotide-binding</keyword>
<keyword id="KW-0934">Plastid</keyword>
<keyword id="KW-0648">Protein biosynthesis</keyword>
<keyword id="KW-1185">Reference proteome</keyword>
<keyword id="KW-0694">RNA-binding</keyword>
<keyword id="KW-0809">Transit peptide</keyword>
<keyword id="KW-0820">tRNA-binding</keyword>
<keyword id="KW-0832">Ubl conjugation</keyword>
<keyword id="KW-0862">Zinc</keyword>
<gene>
    <name type="primary">EMB86</name>
    <name evidence="4" type="synonym">EMB1030</name>
    <name type="synonym">EMB263</name>
    <name type="ordered locus">At5g22800</name>
    <name type="ORF">MRN17.3</name>
</gene>
<feature type="transit peptide" description="Chloroplast and mitochondrion" evidence="1">
    <location>
        <begin position="1"/>
        <end status="unknown"/>
    </location>
</feature>
<feature type="chain" id="PRO_0000402303" description="Alanine--tRNA ligase, chloroplastic/mitochondrial">
    <location>
        <begin status="unknown"/>
        <end position="978"/>
    </location>
</feature>
<feature type="binding site" evidence="1">
    <location>
        <position position="655"/>
    </location>
    <ligand>
        <name>Zn(2+)</name>
        <dbReference type="ChEBI" id="CHEBI:29105"/>
    </ligand>
</feature>
<feature type="binding site" evidence="1">
    <location>
        <position position="659"/>
    </location>
    <ligand>
        <name>Zn(2+)</name>
        <dbReference type="ChEBI" id="CHEBI:29105"/>
    </ligand>
</feature>
<feature type="binding site" evidence="1">
    <location>
        <position position="758"/>
    </location>
    <ligand>
        <name>Zn(2+)</name>
        <dbReference type="ChEBI" id="CHEBI:29105"/>
    </ligand>
</feature>
<feature type="binding site" evidence="1">
    <location>
        <position position="762"/>
    </location>
    <ligand>
        <name>Zn(2+)</name>
        <dbReference type="ChEBI" id="CHEBI:29105"/>
    </ligand>
</feature>
<feature type="cross-link" description="Glycyl lysine isopeptide (Lys-Gly) (interchain with G-Cter in ubiquitin)" evidence="5">
    <location>
        <position position="773"/>
    </location>
</feature>
<proteinExistence type="evidence at protein level"/>
<sequence>MNFSRVNLFDFPLRPILLSHPSSIFVSTRFVTRTSAGVSPSILLPRSTQSPQIIAKSSSVSVQPVSEDAKEDYQSKDVSGDSIRRRFLEFFASRGHKVLPSSSLVPEDPTVLLTIAGMLQFKPIFLGKVPREVPCATTAQRCIRTNDLENVGKTARHHTFFEMLGNFSFGDYFKKEAIKWAWELSTIEFGLPANRVWVSIYEDDDEAFEIWKNEVGVSVERIKRMGEADNFWTSGPTGPCGPCSELYYDFYPERGYDEDVDLGDDTRFIEFYNLVFMQYNKTEDGLLEPLKQKNIDTGLGLERIAQILQKVPNNYETDLIYPIIAKISELANISYDSANDKAKTSLKVIADHMRAVVYLISDGVSPSNIGRGYVVRRLIRRAVRKGKSLGINGDMNGNLKGAFLPAVAEKVIELSTYIDSDVKLKASRIIEEIRQEELHFKKTLERGEKLLDQKLNDALSIADKTKDTPYLDGKDAFLLYDTFGFPVEITAEVAEERGVSIDMNGFEVEMENQRRQSQAAHNVVKLTVEDDADMTKNIADTEFLGYDSLSARAVVKSLLVNGKPVIRVSEGSEVEVLLDRTPFYAESGGQIADHGFLYVSSDGNQEKAVVEVSDVQKSLKIFVHKGTVKSGALEVGKEVEAAVDADLRQRAKVHHTATHLLQSALKKVVGQETSQAGSLVAFDRLRFDFNFNRSLHDNELEEIECLINRWIGDATRLETKVLPLADAKRAGAIAMFGEKYDENEVRVVEVPGVSMELCGGTHVGNTAEIRAFKIISEQGIASGIRRIEAVAGEAFIEYINSRDSQMTRLCSTLKVKAEDVTNRVENLLEELRAARKEASDLRSKAAVYKASVISNKAFTVGTSQTIRVLVESMDDTDADSLKSAAEHLISTLEDPVAVVLGSSPEKDKVSLVAAFSPGVVSLGVQAGKFIGPIAKLCGGGGGGKPNFAQAGGRKPENLPSALEKAREDLVATLSEKLG</sequence>
<evidence type="ECO:0000255" key="1">
    <source>
        <dbReference type="HAMAP-Rule" id="MF_03134"/>
    </source>
</evidence>
<evidence type="ECO:0000269" key="2">
    <source>
    </source>
</evidence>
<evidence type="ECO:0000305" key="3"/>
<evidence type="ECO:0000305" key="4">
    <source>
    </source>
</evidence>
<evidence type="ECO:0007744" key="5">
    <source>
    </source>
</evidence>
<organism>
    <name type="scientific">Arabidopsis thaliana</name>
    <name type="common">Mouse-ear cress</name>
    <dbReference type="NCBI Taxonomy" id="3702"/>
    <lineage>
        <taxon>Eukaryota</taxon>
        <taxon>Viridiplantae</taxon>
        <taxon>Streptophyta</taxon>
        <taxon>Embryophyta</taxon>
        <taxon>Tracheophyta</taxon>
        <taxon>Spermatophyta</taxon>
        <taxon>Magnoliopsida</taxon>
        <taxon>eudicotyledons</taxon>
        <taxon>Gunneridae</taxon>
        <taxon>Pentapetalae</taxon>
        <taxon>rosids</taxon>
        <taxon>malvids</taxon>
        <taxon>Brassicales</taxon>
        <taxon>Brassicaceae</taxon>
        <taxon>Camelineae</taxon>
        <taxon>Arabidopsis</taxon>
    </lineage>
</organism>
<reference key="1">
    <citation type="journal article" date="1997" name="DNA Res.">
        <title>Structural analysis of Arabidopsis thaliana chromosome 5. I. Sequence features of the 1.6 Mb regions covered by twenty physically assigned P1 clones.</title>
        <authorList>
            <person name="Sato S."/>
            <person name="Kotani H."/>
            <person name="Nakamura Y."/>
            <person name="Kaneko T."/>
            <person name="Asamizu E."/>
            <person name="Fukami M."/>
            <person name="Miyajima N."/>
            <person name="Tabata S."/>
        </authorList>
    </citation>
    <scope>NUCLEOTIDE SEQUENCE [LARGE SCALE GENOMIC DNA]</scope>
    <source>
        <strain>cv. Columbia</strain>
    </source>
</reference>
<reference key="2">
    <citation type="journal article" date="2017" name="Plant J.">
        <title>Araport11: a complete reannotation of the Arabidopsis thaliana reference genome.</title>
        <authorList>
            <person name="Cheng C.Y."/>
            <person name="Krishnakumar V."/>
            <person name="Chan A.P."/>
            <person name="Thibaud-Nissen F."/>
            <person name="Schobel S."/>
            <person name="Town C.D."/>
        </authorList>
    </citation>
    <scope>GENOME REANNOTATION</scope>
    <source>
        <strain>cv. Columbia</strain>
    </source>
</reference>
<reference key="3">
    <citation type="journal article" date="2005" name="Plant J.">
        <title>Requirement of aminoacyl-tRNA synthetases for gametogenesis and embryo development in Arabidopsis.</title>
        <authorList>
            <person name="Berg M."/>
            <person name="Rogers R."/>
            <person name="Muralla R."/>
            <person name="Meinke D."/>
        </authorList>
    </citation>
    <scope>DISRUPTION PHENOTYPE</scope>
</reference>
<reference key="4">
    <citation type="journal article" date="2005" name="Proc. Natl. Acad. Sci. U.S.A.">
        <title>Dual targeting is the rule for organellar aminoacyl-tRNA synthetases in Arabidopsis thaliana.</title>
        <authorList>
            <person name="Duchene A.-M."/>
            <person name="Giritch A."/>
            <person name="Hoffmann B."/>
            <person name="Cognat V."/>
            <person name="Lancelin D."/>
            <person name="Peeters N.M."/>
            <person name="Zaepfel M."/>
            <person name="Marechal-Drouard L."/>
            <person name="Small I.D."/>
        </authorList>
    </citation>
    <scope>SUBCELLULAR LOCATION</scope>
</reference>
<reference key="5">
    <citation type="journal article" date="2007" name="Mol. Cell. Proteomics">
        <title>Multidimensional protein identification technology (MudPIT) analysis of ubiquitinated proteins in plants.</title>
        <authorList>
            <person name="Maor R."/>
            <person name="Jones A."/>
            <person name="Nuehse T.S."/>
            <person name="Studholme D.J."/>
            <person name="Peck S.C."/>
            <person name="Shirasu K."/>
        </authorList>
    </citation>
    <scope>UBIQUITINATION [LARGE SCALE ANALYSIS] AT LYS-773</scope>
    <scope>IDENTIFICATION BY MASS SPECTROMETRY [LARGE SCALE ANALYSIS]</scope>
    <source>
        <strain>cv. Landsberg erecta</strain>
    </source>
</reference>
<reference key="6">
    <citation type="journal article" date="2008" name="PLoS ONE">
        <title>Sorting signals, N-terminal modifications and abundance of the chloroplast proteome.</title>
        <authorList>
            <person name="Zybailov B."/>
            <person name="Rutschow H."/>
            <person name="Friso G."/>
            <person name="Rudella A."/>
            <person name="Emanuelsson O."/>
            <person name="Sun Q."/>
            <person name="van Wijk K.J."/>
        </authorList>
    </citation>
    <scope>IDENTIFICATION BY MASS SPECTROMETRY</scope>
    <scope>SUBCELLULAR LOCATION [LARGE SCALE ANALYSIS]</scope>
</reference>
<dbReference type="EC" id="6.1.1.7" evidence="1"/>
<dbReference type="EMBL" id="AB005243">
    <property type="protein sequence ID" value="BAB10601.1"/>
    <property type="status" value="ALT_SEQ"/>
    <property type="molecule type" value="Genomic_DNA"/>
</dbReference>
<dbReference type="EMBL" id="CP002688">
    <property type="protein sequence ID" value="AED93081.1"/>
    <property type="molecule type" value="Genomic_DNA"/>
</dbReference>
<dbReference type="RefSeq" id="NP_680210.2">
    <property type="nucleotide sequence ID" value="NM_147905.3"/>
</dbReference>
<dbReference type="SMR" id="Q9FFC7"/>
<dbReference type="BioGRID" id="17618">
    <property type="interactions" value="1"/>
</dbReference>
<dbReference type="FunCoup" id="Q9FFC7">
    <property type="interactions" value="982"/>
</dbReference>
<dbReference type="STRING" id="3702.Q9FFC7"/>
<dbReference type="GlyGen" id="Q9FFC7">
    <property type="glycosylation" value="1 site"/>
</dbReference>
<dbReference type="iPTMnet" id="Q9FFC7"/>
<dbReference type="MetOSite" id="Q9FFC7"/>
<dbReference type="PaxDb" id="3702-AT5G22800.1"/>
<dbReference type="ProteomicsDB" id="226791"/>
<dbReference type="EnsemblPlants" id="AT5G22800.1">
    <property type="protein sequence ID" value="AT5G22800.1"/>
    <property type="gene ID" value="AT5G22800"/>
</dbReference>
<dbReference type="GeneID" id="832343"/>
<dbReference type="Gramene" id="AT5G22800.1">
    <property type="protein sequence ID" value="AT5G22800.1"/>
    <property type="gene ID" value="AT5G22800"/>
</dbReference>
<dbReference type="KEGG" id="ath:AT5G22800"/>
<dbReference type="Araport" id="AT5G22800"/>
<dbReference type="TAIR" id="AT5G22800">
    <property type="gene designation" value="EMB1030"/>
</dbReference>
<dbReference type="eggNOG" id="KOG0188">
    <property type="taxonomic scope" value="Eukaryota"/>
</dbReference>
<dbReference type="HOGENOM" id="CLU_004485_1_1_1"/>
<dbReference type="InParanoid" id="Q9FFC7"/>
<dbReference type="OMA" id="GFDMEME"/>
<dbReference type="OrthoDB" id="2423964at2759"/>
<dbReference type="PhylomeDB" id="Q9FFC7"/>
<dbReference type="PRO" id="PR:Q9FFC7"/>
<dbReference type="Proteomes" id="UP000006548">
    <property type="component" value="Chromosome 5"/>
</dbReference>
<dbReference type="ExpressionAtlas" id="Q9FFC7">
    <property type="expression patterns" value="baseline and differential"/>
</dbReference>
<dbReference type="GO" id="GO:0009507">
    <property type="term" value="C:chloroplast"/>
    <property type="evidence" value="ECO:0000314"/>
    <property type="project" value="TAIR"/>
</dbReference>
<dbReference type="GO" id="GO:0009570">
    <property type="term" value="C:chloroplast stroma"/>
    <property type="evidence" value="ECO:0007005"/>
    <property type="project" value="TAIR"/>
</dbReference>
<dbReference type="GO" id="GO:0005739">
    <property type="term" value="C:mitochondrion"/>
    <property type="evidence" value="ECO:0000314"/>
    <property type="project" value="TAIR"/>
</dbReference>
<dbReference type="GO" id="GO:0004813">
    <property type="term" value="F:alanine-tRNA ligase activity"/>
    <property type="evidence" value="ECO:0007669"/>
    <property type="project" value="UniProtKB-UniRule"/>
</dbReference>
<dbReference type="GO" id="GO:0005524">
    <property type="term" value="F:ATP binding"/>
    <property type="evidence" value="ECO:0007669"/>
    <property type="project" value="UniProtKB-UniRule"/>
</dbReference>
<dbReference type="GO" id="GO:0000049">
    <property type="term" value="F:tRNA binding"/>
    <property type="evidence" value="ECO:0007669"/>
    <property type="project" value="UniProtKB-KW"/>
</dbReference>
<dbReference type="GO" id="GO:0008270">
    <property type="term" value="F:zinc ion binding"/>
    <property type="evidence" value="ECO:0007669"/>
    <property type="project" value="UniProtKB-UniRule"/>
</dbReference>
<dbReference type="GO" id="GO:0006419">
    <property type="term" value="P:alanyl-tRNA aminoacylation"/>
    <property type="evidence" value="ECO:0007669"/>
    <property type="project" value="UniProtKB-UniRule"/>
</dbReference>
<dbReference type="GO" id="GO:0009793">
    <property type="term" value="P:embryo development ending in seed dormancy"/>
    <property type="evidence" value="ECO:0000315"/>
    <property type="project" value="TAIR"/>
</dbReference>
<dbReference type="CDD" id="cd00673">
    <property type="entry name" value="AlaRS_core"/>
    <property type="match status" value="1"/>
</dbReference>
<dbReference type="FunFam" id="3.10.310.40:FF:000001">
    <property type="entry name" value="Alanine--tRNA ligase"/>
    <property type="match status" value="1"/>
</dbReference>
<dbReference type="FunFam" id="3.30.54.20:FF:000001">
    <property type="entry name" value="Alanine--tRNA ligase"/>
    <property type="match status" value="1"/>
</dbReference>
<dbReference type="FunFam" id="3.30.930.10:FF:000004">
    <property type="entry name" value="Alanine--tRNA ligase"/>
    <property type="match status" value="1"/>
</dbReference>
<dbReference type="FunFam" id="3.30.980.10:FF:000004">
    <property type="entry name" value="Alanine--tRNA ligase, cytoplasmic"/>
    <property type="match status" value="1"/>
</dbReference>
<dbReference type="FunFam" id="2.40.30.130:FF:000007">
    <property type="entry name" value="Probable alanine--tRNA ligase, chloroplastic"/>
    <property type="match status" value="1"/>
</dbReference>
<dbReference type="Gene3D" id="2.40.30.130">
    <property type="match status" value="1"/>
</dbReference>
<dbReference type="Gene3D" id="3.10.310.40">
    <property type="match status" value="1"/>
</dbReference>
<dbReference type="Gene3D" id="3.30.54.20">
    <property type="match status" value="1"/>
</dbReference>
<dbReference type="Gene3D" id="6.10.250.550">
    <property type="match status" value="1"/>
</dbReference>
<dbReference type="Gene3D" id="3.30.930.10">
    <property type="entry name" value="Bira Bifunctional Protein, Domain 2"/>
    <property type="match status" value="1"/>
</dbReference>
<dbReference type="Gene3D" id="3.30.980.10">
    <property type="entry name" value="Threonyl-trna Synthetase, Chain A, domain 2"/>
    <property type="match status" value="1"/>
</dbReference>
<dbReference type="HAMAP" id="MF_00036_B">
    <property type="entry name" value="Ala_tRNA_synth_B"/>
    <property type="match status" value="1"/>
</dbReference>
<dbReference type="HAMAP" id="MF_03134">
    <property type="entry name" value="Ala_tRNA_synth_plantC"/>
    <property type="match status" value="1"/>
</dbReference>
<dbReference type="InterPro" id="IPR045864">
    <property type="entry name" value="aa-tRNA-synth_II/BPL/LPL"/>
</dbReference>
<dbReference type="InterPro" id="IPR002318">
    <property type="entry name" value="Ala-tRNA-lgiase_IIc"/>
</dbReference>
<dbReference type="InterPro" id="IPR018162">
    <property type="entry name" value="Ala-tRNA-ligase_IIc_anticod-bd"/>
</dbReference>
<dbReference type="InterPro" id="IPR018165">
    <property type="entry name" value="Ala-tRNA-synth_IIc_core"/>
</dbReference>
<dbReference type="InterPro" id="IPR018164">
    <property type="entry name" value="Ala-tRNA-synth_IIc_N"/>
</dbReference>
<dbReference type="InterPro" id="IPR050058">
    <property type="entry name" value="Ala-tRNA_ligase"/>
</dbReference>
<dbReference type="InterPro" id="IPR023033">
    <property type="entry name" value="Ala_tRNA_ligase_euk/bac"/>
</dbReference>
<dbReference type="InterPro" id="IPR027522">
    <property type="entry name" value="Ala_tRNA_synth_plant"/>
</dbReference>
<dbReference type="InterPro" id="IPR003156">
    <property type="entry name" value="DHHA1_dom"/>
</dbReference>
<dbReference type="InterPro" id="IPR018163">
    <property type="entry name" value="Thr/Ala-tRNA-synth_IIc_edit"/>
</dbReference>
<dbReference type="InterPro" id="IPR009000">
    <property type="entry name" value="Transl_B-barrel_sf"/>
</dbReference>
<dbReference type="InterPro" id="IPR012947">
    <property type="entry name" value="tRNA_SAD"/>
</dbReference>
<dbReference type="NCBIfam" id="TIGR00344">
    <property type="entry name" value="alaS"/>
    <property type="match status" value="1"/>
</dbReference>
<dbReference type="PANTHER" id="PTHR11777:SF9">
    <property type="entry name" value="ALANINE--TRNA LIGASE, CYTOPLASMIC"/>
    <property type="match status" value="1"/>
</dbReference>
<dbReference type="PANTHER" id="PTHR11777">
    <property type="entry name" value="ALANYL-TRNA SYNTHETASE"/>
    <property type="match status" value="1"/>
</dbReference>
<dbReference type="Pfam" id="PF02272">
    <property type="entry name" value="DHHA1"/>
    <property type="match status" value="1"/>
</dbReference>
<dbReference type="Pfam" id="PF01411">
    <property type="entry name" value="tRNA-synt_2c"/>
    <property type="match status" value="1"/>
</dbReference>
<dbReference type="Pfam" id="PF07973">
    <property type="entry name" value="tRNA_SAD"/>
    <property type="match status" value="1"/>
</dbReference>
<dbReference type="PRINTS" id="PR00980">
    <property type="entry name" value="TRNASYNTHALA"/>
</dbReference>
<dbReference type="SMART" id="SM00863">
    <property type="entry name" value="tRNA_SAD"/>
    <property type="match status" value="1"/>
</dbReference>
<dbReference type="SUPFAM" id="SSF55681">
    <property type="entry name" value="Class II aaRS and biotin synthetases"/>
    <property type="match status" value="1"/>
</dbReference>
<dbReference type="SUPFAM" id="SSF101353">
    <property type="entry name" value="Putative anticodon-binding domain of alanyl-tRNA synthetase (AlaRS)"/>
    <property type="match status" value="1"/>
</dbReference>
<dbReference type="SUPFAM" id="SSF55186">
    <property type="entry name" value="ThrRS/AlaRS common domain"/>
    <property type="match status" value="1"/>
</dbReference>
<dbReference type="SUPFAM" id="SSF50447">
    <property type="entry name" value="Translation proteins"/>
    <property type="match status" value="1"/>
</dbReference>
<dbReference type="PROSITE" id="PS50860">
    <property type="entry name" value="AA_TRNA_LIGASE_II_ALA"/>
    <property type="match status" value="1"/>
</dbReference>